<gene>
    <name evidence="1" type="primary">psbZ</name>
</gene>
<evidence type="ECO:0000255" key="1">
    <source>
        <dbReference type="HAMAP-Rule" id="MF_00644"/>
    </source>
</evidence>
<sequence>MTLAFQLAVFALIATSLILLISVPVVFASPDGWSSNKNVVFSGTSLWIGLVFLVGILNSLIS</sequence>
<reference key="1">
    <citation type="journal article" date="2006" name="Theor. Appl. Genet.">
        <title>Complete chloroplast genome sequences of Solanum bulbocastanum, Solanum lycopersicum and comparative analyses with other Solanaceae genomes.</title>
        <authorList>
            <person name="Daniell H."/>
            <person name="Lee S.-B."/>
            <person name="Grevich J."/>
            <person name="Saski C."/>
            <person name="Quesada-Vargas T."/>
            <person name="Guda C."/>
            <person name="Tomkins J."/>
            <person name="Jansen R.K."/>
        </authorList>
    </citation>
    <scope>NUCLEOTIDE SEQUENCE [LARGE SCALE GENOMIC DNA]</scope>
    <source>
        <strain>cv. LA3023</strain>
    </source>
</reference>
<reference key="2">
    <citation type="journal article" date="2006" name="J. Mol. Evol.">
        <title>Sequence of the tomato chloroplast DNA and evolutionary comparison of solanaceous plastid genomes.</title>
        <authorList>
            <person name="Kahlau S."/>
            <person name="Aspinall S."/>
            <person name="Gray J.C."/>
            <person name="Bock R."/>
        </authorList>
    </citation>
    <scope>NUCLEOTIDE SEQUENCE [LARGE SCALE GENOMIC DNA]</scope>
    <source>
        <strain>cv. IPA-6</strain>
    </source>
</reference>
<protein>
    <recommendedName>
        <fullName evidence="1">Photosystem II reaction center protein Z</fullName>
        <shortName evidence="1">PSII-Z</shortName>
    </recommendedName>
</protein>
<name>PSBZ_SOLLC</name>
<proteinExistence type="inferred from homology"/>
<comment type="function">
    <text evidence="1">May control the interaction of photosystem II (PSII) cores with the light-harvesting antenna, regulates electron flow through the 2 photosystem reaction centers. PSII is a light-driven water plastoquinone oxidoreductase, using light energy to abstract electrons from H(2)O, generating a proton gradient subsequently used for ATP formation.</text>
</comment>
<comment type="subunit">
    <text evidence="1">PSII is composed of 1 copy each of membrane proteins PsbA, PsbB, PsbC, PsbD, PsbE, PsbF, PsbH, PsbI, PsbJ, PsbK, PsbL, PsbM, PsbT, PsbY, PsbZ, Psb30/Ycf12, at least 3 peripheral proteins of the oxygen-evolving complex and a large number of cofactors. It forms dimeric complexes.</text>
</comment>
<comment type="subcellular location">
    <subcellularLocation>
        <location evidence="1">Plastid</location>
        <location evidence="1">Chloroplast thylakoid membrane</location>
        <topology evidence="1">Multi-pass membrane protein</topology>
    </subcellularLocation>
</comment>
<comment type="similarity">
    <text evidence="1">Belongs to the PsbZ family.</text>
</comment>
<geneLocation type="chloroplast"/>
<dbReference type="EMBL" id="DQ347959">
    <property type="protein sequence ID" value="ABC56297.1"/>
    <property type="molecule type" value="Genomic_DNA"/>
</dbReference>
<dbReference type="EMBL" id="AM087200">
    <property type="protein sequence ID" value="CAJ32390.1"/>
    <property type="molecule type" value="Genomic_DNA"/>
</dbReference>
<dbReference type="RefSeq" id="AP_004925.1">
    <property type="nucleotide sequence ID" value="AC_000188.1"/>
</dbReference>
<dbReference type="RefSeq" id="YP_008563085.1">
    <property type="nucleotide sequence ID" value="NC_007898.3"/>
</dbReference>
<dbReference type="SMR" id="Q2MIA3"/>
<dbReference type="FunCoup" id="Q2MIA3">
    <property type="interactions" value="51"/>
</dbReference>
<dbReference type="STRING" id="4081.Q2MIA3"/>
<dbReference type="PaxDb" id="4081-Solyc01g102770.1.1"/>
<dbReference type="EnsemblPlants" id="Solyc01g102770.1.1">
    <property type="protein sequence ID" value="Solyc01g102770.1.1.1"/>
    <property type="gene ID" value="Solyc01g102770.1"/>
</dbReference>
<dbReference type="GeneID" id="3950482"/>
<dbReference type="Gramene" id="Solyc01g102770.1.1">
    <property type="protein sequence ID" value="Solyc01g102770.1.1.1"/>
    <property type="gene ID" value="Solyc01g102770.1"/>
</dbReference>
<dbReference type="KEGG" id="sly:3950482"/>
<dbReference type="eggNOG" id="ENOG502S7KE">
    <property type="taxonomic scope" value="Eukaryota"/>
</dbReference>
<dbReference type="HOGENOM" id="CLU_195286_0_0_1"/>
<dbReference type="InParanoid" id="Q2MIA3"/>
<dbReference type="OMA" id="VACRIRN"/>
<dbReference type="OrthoDB" id="1161947at2759"/>
<dbReference type="PhylomeDB" id="Q2MIA3"/>
<dbReference type="Proteomes" id="UP000004994">
    <property type="component" value="Chloroplast"/>
</dbReference>
<dbReference type="ExpressionAtlas" id="Q2MIA3">
    <property type="expression patterns" value="baseline"/>
</dbReference>
<dbReference type="GO" id="GO:0009535">
    <property type="term" value="C:chloroplast thylakoid membrane"/>
    <property type="evidence" value="ECO:0007669"/>
    <property type="project" value="UniProtKB-SubCell"/>
</dbReference>
<dbReference type="GO" id="GO:0009539">
    <property type="term" value="C:photosystem II reaction center"/>
    <property type="evidence" value="ECO:0007669"/>
    <property type="project" value="InterPro"/>
</dbReference>
<dbReference type="GO" id="GO:0015979">
    <property type="term" value="P:photosynthesis"/>
    <property type="evidence" value="ECO:0007669"/>
    <property type="project" value="UniProtKB-UniRule"/>
</dbReference>
<dbReference type="GO" id="GO:0042549">
    <property type="term" value="P:photosystem II stabilization"/>
    <property type="evidence" value="ECO:0007669"/>
    <property type="project" value="InterPro"/>
</dbReference>
<dbReference type="FunFam" id="1.10.287.740:FF:000001">
    <property type="entry name" value="Photosystem II reaction center protein Z"/>
    <property type="match status" value="1"/>
</dbReference>
<dbReference type="Gene3D" id="1.10.287.740">
    <property type="entry name" value="Photosystem II PsbZ, reaction centre"/>
    <property type="match status" value="1"/>
</dbReference>
<dbReference type="HAMAP" id="MF_00644">
    <property type="entry name" value="PSII_PsbZ"/>
    <property type="match status" value="1"/>
</dbReference>
<dbReference type="InterPro" id="IPR002644">
    <property type="entry name" value="PSII_PsbZ"/>
</dbReference>
<dbReference type="InterPro" id="IPR036512">
    <property type="entry name" value="PSII_PsbZ_sf"/>
</dbReference>
<dbReference type="NCBIfam" id="TIGR03043">
    <property type="entry name" value="PS_II_psbZ"/>
    <property type="match status" value="1"/>
</dbReference>
<dbReference type="PANTHER" id="PTHR34971">
    <property type="entry name" value="PHOTOSYSTEM II REACTION CENTER PROTEIN Z"/>
    <property type="match status" value="1"/>
</dbReference>
<dbReference type="PANTHER" id="PTHR34971:SF2">
    <property type="entry name" value="PHOTOSYSTEM II REACTION CENTER PROTEIN Z"/>
    <property type="match status" value="1"/>
</dbReference>
<dbReference type="Pfam" id="PF01737">
    <property type="entry name" value="Ycf9"/>
    <property type="match status" value="1"/>
</dbReference>
<dbReference type="SUPFAM" id="SSF161055">
    <property type="entry name" value="PsbZ-like"/>
    <property type="match status" value="1"/>
</dbReference>
<keyword id="KW-0150">Chloroplast</keyword>
<keyword id="KW-0472">Membrane</keyword>
<keyword id="KW-0602">Photosynthesis</keyword>
<keyword id="KW-0604">Photosystem II</keyword>
<keyword id="KW-0934">Plastid</keyword>
<keyword id="KW-0674">Reaction center</keyword>
<keyword id="KW-1185">Reference proteome</keyword>
<keyword id="KW-0793">Thylakoid</keyword>
<keyword id="KW-0812">Transmembrane</keyword>
<keyword id="KW-1133">Transmembrane helix</keyword>
<organism>
    <name type="scientific">Solanum lycopersicum</name>
    <name type="common">Tomato</name>
    <name type="synonym">Lycopersicon esculentum</name>
    <dbReference type="NCBI Taxonomy" id="4081"/>
    <lineage>
        <taxon>Eukaryota</taxon>
        <taxon>Viridiplantae</taxon>
        <taxon>Streptophyta</taxon>
        <taxon>Embryophyta</taxon>
        <taxon>Tracheophyta</taxon>
        <taxon>Spermatophyta</taxon>
        <taxon>Magnoliopsida</taxon>
        <taxon>eudicotyledons</taxon>
        <taxon>Gunneridae</taxon>
        <taxon>Pentapetalae</taxon>
        <taxon>asterids</taxon>
        <taxon>lamiids</taxon>
        <taxon>Solanales</taxon>
        <taxon>Solanaceae</taxon>
        <taxon>Solanoideae</taxon>
        <taxon>Solaneae</taxon>
        <taxon>Solanum</taxon>
        <taxon>Solanum subgen. Lycopersicon</taxon>
    </lineage>
</organism>
<feature type="chain" id="PRO_0000277236" description="Photosystem II reaction center protein Z">
    <location>
        <begin position="1"/>
        <end position="62"/>
    </location>
</feature>
<feature type="transmembrane region" description="Helical" evidence="1">
    <location>
        <begin position="8"/>
        <end position="28"/>
    </location>
</feature>
<feature type="transmembrane region" description="Helical" evidence="1">
    <location>
        <begin position="41"/>
        <end position="61"/>
    </location>
</feature>
<accession>Q2MIA3</accession>